<protein>
    <recommendedName>
        <fullName evidence="1">3D-(3,5/4)-trihydroxycyclohexane-1,2-dione hydrolase</fullName>
        <shortName evidence="1">THcHDO hydrolase</shortName>
        <ecNumber evidence="1">3.7.1.22</ecNumber>
    </recommendedName>
</protein>
<comment type="function">
    <text evidence="1">Involved in the cleavage of the C1-C2 bond of 3D-(3,5/4)-trihydroxycyclohexane-1,2-dione (THcHDO) to yield 5-deoxy-glucuronate (5DG).</text>
</comment>
<comment type="catalytic activity">
    <reaction evidence="1">
        <text>3D-3,5/4-trihydroxycyclohexane-1,2-dione + H2O = 5-deoxy-D-glucuronate + H(+)</text>
        <dbReference type="Rhea" id="RHEA:25836"/>
        <dbReference type="ChEBI" id="CHEBI:15377"/>
        <dbReference type="ChEBI" id="CHEBI:15378"/>
        <dbReference type="ChEBI" id="CHEBI:28446"/>
        <dbReference type="ChEBI" id="CHEBI:58852"/>
        <dbReference type="EC" id="3.7.1.22"/>
    </reaction>
</comment>
<comment type="cofactor">
    <cofactor evidence="1">
        <name>Mg(2+)</name>
        <dbReference type="ChEBI" id="CHEBI:18420"/>
    </cofactor>
    <text evidence="1">Binds 1 Mg(2+) ion per subunit.</text>
</comment>
<comment type="cofactor">
    <cofactor evidence="1">
        <name>thiamine diphosphate</name>
        <dbReference type="ChEBI" id="CHEBI:58937"/>
    </cofactor>
    <text evidence="1">Binds 1 thiamine pyrophosphate per subunit.</text>
</comment>
<comment type="pathway">
    <text evidence="1">Polyol metabolism; myo-inositol degradation into acetyl-CoA; acetyl-CoA from myo-inositol: step 3/7.</text>
</comment>
<comment type="similarity">
    <text evidence="1">Belongs to the TPP enzyme family.</text>
</comment>
<gene>
    <name evidence="1" type="primary">iolD</name>
    <name type="ordered locus">BLi04248</name>
    <name type="ordered locus">BL00243</name>
</gene>
<proteinExistence type="inferred from homology"/>
<sequence length="637" mass="70180">MGKKIRLTTAQALIKFLNQQYIHVDGEETPFVEGIFTIFGHGNVVGIGQALEQDAGHLKVFQGKNEQGMAHAAMAYSKQMLRRKIYAVSTSVGPGAANLVAAAGTALANNIPVLLIPADTFATRQPDPVLQQVEQEYSAAITTNDALKPVSRYWDRITRPEQLMSSLIRAFEVMTDPAKAGPATICISQDVEGEAYDFDESFFEKRVHYVDRKEPSERELKGAAELIKSSKKPLILVGGGAKYSGARDELIAMSEAYNIPLVETQAGKSTVEADFANNLGGMGITGTLAANKAARGADLIIGIGTRYTDFATSSKTAFDFDNAKFLNINVSRMQAYKLDAFQVVADAKVTLGKLHGLLEGYKSEFGSTIKELKDEWLAERDRLSKVTFKRENFTPEIKDHFSQDILNEYADVLQTELPQTTALLAINETVDPDSVVICSAGSLPGDLQRLWHSNVPNTYHLEYGYSCMGYEVSGTLGLKLAHPDREVYSLVGDGSFLMLHSELITAIQYNKKINVLLFDNSGFGCINNLQMDHGNGSYYCEFRTADNQILNVDYAKVAEGYGAKTYKANTIEELKAALEDAKKQDVSTLIEMKVLPKTMTDGYDSWWHVGVAEVSEQESVQKAYKAKEKMLESAKQY</sequence>
<evidence type="ECO:0000255" key="1">
    <source>
        <dbReference type="HAMAP-Rule" id="MF_01669"/>
    </source>
</evidence>
<dbReference type="EC" id="3.7.1.22" evidence="1"/>
<dbReference type="EMBL" id="CP000002">
    <property type="protein sequence ID" value="AAU25682.1"/>
    <property type="molecule type" value="Genomic_DNA"/>
</dbReference>
<dbReference type="EMBL" id="AE017333">
    <property type="protein sequence ID" value="AAU43061.1"/>
    <property type="molecule type" value="Genomic_DNA"/>
</dbReference>
<dbReference type="RefSeq" id="WP_011198460.1">
    <property type="nucleotide sequence ID" value="NC_006322.1"/>
</dbReference>
<dbReference type="SMR" id="Q65D03"/>
<dbReference type="STRING" id="279010.BL00243"/>
<dbReference type="GeneID" id="92859182"/>
<dbReference type="KEGG" id="bld:BLi04248"/>
<dbReference type="KEGG" id="bli:BL00243"/>
<dbReference type="PATRIC" id="fig|279010.13.peg.4332"/>
<dbReference type="eggNOG" id="COG3962">
    <property type="taxonomic scope" value="Bacteria"/>
</dbReference>
<dbReference type="HOGENOM" id="CLU_013748_6_0_9"/>
<dbReference type="UniPathway" id="UPA00076">
    <property type="reaction ID" value="UER00145"/>
</dbReference>
<dbReference type="Proteomes" id="UP000000606">
    <property type="component" value="Chromosome"/>
</dbReference>
<dbReference type="GO" id="GO:0005948">
    <property type="term" value="C:acetolactate synthase complex"/>
    <property type="evidence" value="ECO:0007669"/>
    <property type="project" value="TreeGrafter"/>
</dbReference>
<dbReference type="GO" id="GO:0102481">
    <property type="term" value="F:3D-(3,5/4)-trihydroxycyclohexane-1,2-dione hydrolase activity"/>
    <property type="evidence" value="ECO:0007669"/>
    <property type="project" value="UniProtKB-EC"/>
</dbReference>
<dbReference type="GO" id="GO:0003984">
    <property type="term" value="F:acetolactate synthase activity"/>
    <property type="evidence" value="ECO:0007669"/>
    <property type="project" value="TreeGrafter"/>
</dbReference>
<dbReference type="GO" id="GO:0050660">
    <property type="term" value="F:flavin adenine dinucleotide binding"/>
    <property type="evidence" value="ECO:0007669"/>
    <property type="project" value="TreeGrafter"/>
</dbReference>
<dbReference type="GO" id="GO:0000287">
    <property type="term" value="F:magnesium ion binding"/>
    <property type="evidence" value="ECO:0007669"/>
    <property type="project" value="UniProtKB-UniRule"/>
</dbReference>
<dbReference type="GO" id="GO:0030976">
    <property type="term" value="F:thiamine pyrophosphate binding"/>
    <property type="evidence" value="ECO:0007669"/>
    <property type="project" value="UniProtKB-UniRule"/>
</dbReference>
<dbReference type="GO" id="GO:0019310">
    <property type="term" value="P:inositol catabolic process"/>
    <property type="evidence" value="ECO:0007669"/>
    <property type="project" value="UniProtKB-UniRule"/>
</dbReference>
<dbReference type="GO" id="GO:0009097">
    <property type="term" value="P:isoleucine biosynthetic process"/>
    <property type="evidence" value="ECO:0007669"/>
    <property type="project" value="TreeGrafter"/>
</dbReference>
<dbReference type="GO" id="GO:0009099">
    <property type="term" value="P:L-valine biosynthetic process"/>
    <property type="evidence" value="ECO:0007669"/>
    <property type="project" value="TreeGrafter"/>
</dbReference>
<dbReference type="CDD" id="cd02003">
    <property type="entry name" value="TPP_IolD"/>
    <property type="match status" value="1"/>
</dbReference>
<dbReference type="CDD" id="cd07035">
    <property type="entry name" value="TPP_PYR_POX_like"/>
    <property type="match status" value="1"/>
</dbReference>
<dbReference type="Gene3D" id="3.40.50.970">
    <property type="match status" value="2"/>
</dbReference>
<dbReference type="Gene3D" id="3.40.50.1220">
    <property type="entry name" value="TPP-binding domain"/>
    <property type="match status" value="1"/>
</dbReference>
<dbReference type="HAMAP" id="MF_01669">
    <property type="entry name" value="IolD"/>
    <property type="match status" value="1"/>
</dbReference>
<dbReference type="InterPro" id="IPR029035">
    <property type="entry name" value="DHS-like_NAD/FAD-binding_dom"/>
</dbReference>
<dbReference type="InterPro" id="IPR030817">
    <property type="entry name" value="Myo_inos_IolD"/>
</dbReference>
<dbReference type="InterPro" id="IPR023757">
    <property type="entry name" value="THcHDO_hydrolase_firmi"/>
</dbReference>
<dbReference type="InterPro" id="IPR029061">
    <property type="entry name" value="THDP-binding"/>
</dbReference>
<dbReference type="InterPro" id="IPR012000">
    <property type="entry name" value="Thiamin_PyroP_enz_cen_dom"/>
</dbReference>
<dbReference type="InterPro" id="IPR012001">
    <property type="entry name" value="Thiamin_PyroP_enz_TPP-bd_dom"/>
</dbReference>
<dbReference type="InterPro" id="IPR000399">
    <property type="entry name" value="TPP-bd_CS"/>
</dbReference>
<dbReference type="InterPro" id="IPR045229">
    <property type="entry name" value="TPP_enz"/>
</dbReference>
<dbReference type="InterPro" id="IPR011766">
    <property type="entry name" value="TPP_enzyme_TPP-bd"/>
</dbReference>
<dbReference type="NCBIfam" id="TIGR04377">
    <property type="entry name" value="myo_inos_iolD"/>
    <property type="match status" value="1"/>
</dbReference>
<dbReference type="PANTHER" id="PTHR18968:SF9">
    <property type="entry name" value="3D-(3,5_4)-TRIHYDROXYCYCLOHEXANE-1,2-DIONE HYDROLASE"/>
    <property type="match status" value="1"/>
</dbReference>
<dbReference type="PANTHER" id="PTHR18968">
    <property type="entry name" value="THIAMINE PYROPHOSPHATE ENZYMES"/>
    <property type="match status" value="1"/>
</dbReference>
<dbReference type="Pfam" id="PF02775">
    <property type="entry name" value="TPP_enzyme_C"/>
    <property type="match status" value="1"/>
</dbReference>
<dbReference type="Pfam" id="PF00205">
    <property type="entry name" value="TPP_enzyme_M"/>
    <property type="match status" value="1"/>
</dbReference>
<dbReference type="Pfam" id="PF02776">
    <property type="entry name" value="TPP_enzyme_N"/>
    <property type="match status" value="1"/>
</dbReference>
<dbReference type="SUPFAM" id="SSF52467">
    <property type="entry name" value="DHS-like NAD/FAD-binding domain"/>
    <property type="match status" value="1"/>
</dbReference>
<dbReference type="SUPFAM" id="SSF52518">
    <property type="entry name" value="Thiamin diphosphate-binding fold (THDP-binding)"/>
    <property type="match status" value="2"/>
</dbReference>
<dbReference type="PROSITE" id="PS00187">
    <property type="entry name" value="TPP_ENZYMES"/>
    <property type="match status" value="1"/>
</dbReference>
<organism>
    <name type="scientific">Bacillus licheniformis (strain ATCC 14580 / DSM 13 / JCM 2505 / CCUG 7422 / NBRC 12200 / NCIMB 9375 / NCTC 10341 / NRRL NRS-1264 / Gibson 46)</name>
    <dbReference type="NCBI Taxonomy" id="279010"/>
    <lineage>
        <taxon>Bacteria</taxon>
        <taxon>Bacillati</taxon>
        <taxon>Bacillota</taxon>
        <taxon>Bacilli</taxon>
        <taxon>Bacillales</taxon>
        <taxon>Bacillaceae</taxon>
        <taxon>Bacillus</taxon>
    </lineage>
</organism>
<name>IOLD_BACLD</name>
<keyword id="KW-0378">Hydrolase</keyword>
<keyword id="KW-0460">Magnesium</keyword>
<keyword id="KW-0479">Metal-binding</keyword>
<keyword id="KW-0520">NAD</keyword>
<keyword id="KW-1185">Reference proteome</keyword>
<keyword id="KW-0786">Thiamine pyrophosphate</keyword>
<feature type="chain" id="PRO_0000352534" description="3D-(3,5/4)-trihydroxycyclohexane-1,2-dione hydrolase">
    <location>
        <begin position="1"/>
        <end position="637"/>
    </location>
</feature>
<feature type="region of interest" description="Thiamine pyrophosphate binding" evidence="1">
    <location>
        <begin position="442"/>
        <end position="522"/>
    </location>
</feature>
<feature type="binding site" evidence="1">
    <location>
        <position position="66"/>
    </location>
    <ligand>
        <name>thiamine diphosphate</name>
        <dbReference type="ChEBI" id="CHEBI:58937"/>
    </ligand>
</feature>
<feature type="binding site" evidence="1">
    <location>
        <position position="493"/>
    </location>
    <ligand>
        <name>Mg(2+)</name>
        <dbReference type="ChEBI" id="CHEBI:18420"/>
    </ligand>
</feature>
<feature type="binding site" evidence="1">
    <location>
        <position position="520"/>
    </location>
    <ligand>
        <name>Mg(2+)</name>
        <dbReference type="ChEBI" id="CHEBI:18420"/>
    </ligand>
</feature>
<accession>Q65D03</accession>
<accession>Q62NH9</accession>
<reference key="1">
    <citation type="journal article" date="2004" name="J. Mol. Microbiol. Biotechnol.">
        <title>The complete genome sequence of Bacillus licheniformis DSM13, an organism with great industrial potential.</title>
        <authorList>
            <person name="Veith B."/>
            <person name="Herzberg C."/>
            <person name="Steckel S."/>
            <person name="Feesche J."/>
            <person name="Maurer K.H."/>
            <person name="Ehrenreich P."/>
            <person name="Baeumer S."/>
            <person name="Henne A."/>
            <person name="Liesegang H."/>
            <person name="Merkl R."/>
            <person name="Ehrenreich A."/>
            <person name="Gottschalk G."/>
        </authorList>
    </citation>
    <scope>NUCLEOTIDE SEQUENCE [LARGE SCALE GENOMIC DNA]</scope>
    <source>
        <strain>ATCC 14580 / DSM 13 / JCM 2505 / CCUG 7422 / NBRC 12200 / NCIMB 9375 / NCTC 10341 / NRRL NRS-1264 / Gibson 46</strain>
    </source>
</reference>
<reference key="2">
    <citation type="journal article" date="2004" name="Genome Biol.">
        <title>Complete genome sequence of the industrial bacterium Bacillus licheniformis and comparisons with closely related Bacillus species.</title>
        <authorList>
            <person name="Rey M.W."/>
            <person name="Ramaiya P."/>
            <person name="Nelson B.A."/>
            <person name="Brody-Karpin S.D."/>
            <person name="Zaretsky E.J."/>
            <person name="Tang M."/>
            <person name="Lopez de Leon A."/>
            <person name="Xiang H."/>
            <person name="Gusti V."/>
            <person name="Clausen I.G."/>
            <person name="Olsen P.B."/>
            <person name="Rasmussen M.D."/>
            <person name="Andersen J.T."/>
            <person name="Joergensen P.L."/>
            <person name="Larsen T.S."/>
            <person name="Sorokin A."/>
            <person name="Bolotin A."/>
            <person name="Lapidus A."/>
            <person name="Galleron N."/>
            <person name="Ehrlich S.D."/>
            <person name="Berka R.M."/>
        </authorList>
    </citation>
    <scope>NUCLEOTIDE SEQUENCE [LARGE SCALE GENOMIC DNA]</scope>
    <source>
        <strain>ATCC 14580 / DSM 13 / JCM 2505 / CCUG 7422 / NBRC 12200 / NCIMB 9375 / NCTC 10341 / NRRL NRS-1264 / Gibson 46</strain>
    </source>
</reference>